<protein>
    <recommendedName>
        <fullName>Rugosauperolein-2</fullName>
    </recommendedName>
    <alternativeName>
        <fullName>Rugosauperolein II</fullName>
    </alternativeName>
    <alternativeName>
        <fullName>[Lys5,Thr6]-physalaemin</fullName>
    </alternativeName>
</protein>
<proteinExistence type="evidence at protein level"/>
<comment type="function">
    <text>Tachykinins are active peptides which excite neurons, evoke behavioral responses, are potent vasodilators and secretagogues, and contract (directly or indirectly) many smooth muscles.</text>
</comment>
<comment type="subcellular location">
    <subcellularLocation>
        <location>Secreted</location>
    </subcellularLocation>
</comment>
<comment type="tissue specificity">
    <text>Expressed by the skin glands.</text>
</comment>
<comment type="similarity">
    <text evidence="2">Belongs to the tachykinin family.</text>
</comment>
<keyword id="KW-0027">Amidation</keyword>
<keyword id="KW-0878">Amphibian defense peptide</keyword>
<keyword id="KW-0903">Direct protein sequencing</keyword>
<keyword id="KW-0527">Neuropeptide</keyword>
<keyword id="KW-0873">Pyrrolidone carboxylic acid</keyword>
<keyword id="KW-0964">Secreted</keyword>
<evidence type="ECO:0000269" key="1">
    <source>
    </source>
</evidence>
<evidence type="ECO:0000305" key="2"/>
<sequence>QADPKTFYGLM</sequence>
<dbReference type="GO" id="GO:0005576">
    <property type="term" value="C:extracellular region"/>
    <property type="evidence" value="ECO:0007669"/>
    <property type="project" value="UniProtKB-SubCell"/>
</dbReference>
<dbReference type="GO" id="GO:0006952">
    <property type="term" value="P:defense response"/>
    <property type="evidence" value="ECO:0007669"/>
    <property type="project" value="UniProtKB-KW"/>
</dbReference>
<dbReference type="GO" id="GO:0007218">
    <property type="term" value="P:neuropeptide signaling pathway"/>
    <property type="evidence" value="ECO:0007669"/>
    <property type="project" value="UniProtKB-KW"/>
</dbReference>
<dbReference type="GO" id="GO:0007217">
    <property type="term" value="P:tachykinin receptor signaling pathway"/>
    <property type="evidence" value="ECO:0007669"/>
    <property type="project" value="InterPro"/>
</dbReference>
<dbReference type="InterPro" id="IPR013055">
    <property type="entry name" value="Tachy_Neuro_lke_CS"/>
</dbReference>
<dbReference type="InterPro" id="IPR008215">
    <property type="entry name" value="Tachykinin_dom"/>
</dbReference>
<dbReference type="Pfam" id="PF02202">
    <property type="entry name" value="Tachykinin"/>
    <property type="match status" value="1"/>
</dbReference>
<dbReference type="PROSITE" id="PS00267">
    <property type="entry name" value="TACHYKININ"/>
    <property type="match status" value="1"/>
</dbReference>
<feature type="peptide" id="PRO_0000044415" description="Rugosauperolein-2">
    <location>
        <begin position="1"/>
        <end position="11"/>
    </location>
</feature>
<feature type="modified residue" description="Pyrrolidone carboxylic acid" evidence="1">
    <location>
        <position position="1"/>
    </location>
</feature>
<feature type="modified residue" description="Methionine amide" evidence="1">
    <location>
        <position position="11"/>
    </location>
</feature>
<name>TKN2_UPERU</name>
<accession>P08616</accession>
<reference key="1">
    <citation type="journal article" date="1980" name="Chem. Pharm. Bull.">
        <title>Physalaemin- and bombesin-like peptides in the skin of the Australian leptodactylid frog Uperoleia rugosa.</title>
        <authorList>
            <person name="Nakajima T."/>
            <person name="Yasuhara T."/>
            <person name="Erspamer V."/>
            <person name="Erspamer G.F."/>
            <person name="Negri L."/>
        </authorList>
    </citation>
    <scope>PROTEIN SEQUENCE</scope>
    <scope>PYROGLUTAMATE FORMATION AT GLN-1</scope>
    <scope>AMIDATION AT MET-11</scope>
    <source>
        <tissue>Skin secretion</tissue>
    </source>
</reference>
<organism>
    <name type="scientific">Uperoleia rugosa</name>
    <name type="common">Wrinkled toadlet</name>
    <name type="synonym">Pseudophryne rugosa</name>
    <dbReference type="NCBI Taxonomy" id="8368"/>
    <lineage>
        <taxon>Eukaryota</taxon>
        <taxon>Metazoa</taxon>
        <taxon>Chordata</taxon>
        <taxon>Craniata</taxon>
        <taxon>Vertebrata</taxon>
        <taxon>Euteleostomi</taxon>
        <taxon>Amphibia</taxon>
        <taxon>Batrachia</taxon>
        <taxon>Anura</taxon>
        <taxon>Neobatrachia</taxon>
        <taxon>Myobatrachoidea</taxon>
        <taxon>Myobatrachidae</taxon>
        <taxon>Myobatrachinae</taxon>
        <taxon>Uperoleia</taxon>
    </lineage>
</organism>